<evidence type="ECO:0000256" key="1">
    <source>
        <dbReference type="SAM" id="MobiDB-lite"/>
    </source>
</evidence>
<evidence type="ECO:0000269" key="2">
    <source>
    </source>
</evidence>
<evidence type="ECO:0000269" key="3">
    <source>
    </source>
</evidence>
<evidence type="ECO:0000269" key="4">
    <source>
    </source>
</evidence>
<evidence type="ECO:0000269" key="5">
    <source ref="6"/>
</evidence>
<evidence type="ECO:0000303" key="6">
    <source ref="1"/>
</evidence>
<evidence type="ECO:0000305" key="7"/>
<evidence type="ECO:0000312" key="8">
    <source>
        <dbReference type="HGNC" id="HGNC:5176"/>
    </source>
</evidence>
<evidence type="ECO:0007744" key="9">
    <source>
        <dbReference type="PDB" id="7MQ8"/>
    </source>
</evidence>
<evidence type="ECO:0007744" key="10">
    <source>
        <dbReference type="PDB" id="7MQ9"/>
    </source>
</evidence>
<evidence type="ECO:0007744" key="11">
    <source>
    </source>
</evidence>
<evidence type="ECO:0007744" key="12">
    <source>
    </source>
</evidence>
<evidence type="ECO:0007744" key="13">
    <source>
    </source>
</evidence>
<evidence type="ECO:0007744" key="14">
    <source>
    </source>
</evidence>
<evidence type="ECO:0007744" key="15">
    <source>
    </source>
</evidence>
<name>KRR1_HUMAN</name>
<comment type="function">
    <text evidence="3">Part of the small subunit (SSU) processome, first precursor of the small eukaryotic ribosomal subunit. During the assembly of the SSU processome in the nucleolus, many ribosome biogenesis factors, an RNA chaperone and ribosomal proteins associate with the nascent pre-rRNA and work in concert to generate RNA folding, modifications, rearrangements and cleavage as well as targeted degradation of pre-ribosomal RNA by the RNA exosome.</text>
</comment>
<comment type="subunit">
    <text evidence="3">Part of the small subunit (SSU) processome, composed of more than 70 proteins and the RNA chaperone small nucleolar RNA (snoRNA) U3.</text>
</comment>
<comment type="subunit">
    <text evidence="4">(Microbial infection) Directly interacts with HIV-1 protein VPR. Also identified in a complex with NR3C1 and HIV-1 protein VPR.</text>
</comment>
<comment type="interaction">
    <interactant intactId="EBI-744525">
        <id>Q13601</id>
    </interactant>
    <interactant intactId="EBI-352783">
        <id>P62263</id>
        <label>RPS14</label>
    </interactant>
    <organismsDiffer>false</organismsDiffer>
    <experiments>6</experiments>
</comment>
<comment type="interaction">
    <interactant intactId="EBI-744525">
        <id>Q13601</id>
    </interactant>
    <interactant intactId="EBI-539478">
        <id>Q96SB4</id>
        <label>SRPK1</label>
    </interactant>
    <organismsDiffer>false</organismsDiffer>
    <experiments>2</experiments>
</comment>
<comment type="interaction">
    <interactant intactId="EBI-744525">
        <id>Q13601</id>
    </interactant>
    <interactant intactId="EBI-6264672">
        <id>Q9H171</id>
        <label>ZBP1</label>
    </interactant>
    <organismsDiffer>false</organismsDiffer>
    <experiments>3</experiments>
</comment>
<comment type="subcellular location">
    <subcellularLocation>
        <location evidence="2 3">Nucleus</location>
        <location evidence="2 3">Nucleolus</location>
    </subcellularLocation>
</comment>
<comment type="subcellular location">
    <subcellularLocation>
        <location evidence="4">Nucleus</location>
    </subcellularLocation>
    <subcellularLocation>
        <location evidence="4">Cytoplasm</location>
    </subcellularLocation>
    <text evidence="4">(Microbial infection) Translocates from cytoplasm to nucleus after exposure to HIV-1 virus or HIV-1 protein VPR or induction by hydrocortisone and dexamethasone in the absence of HIV-1 protein VPR.</text>
</comment>
<comment type="alternative products">
    <event type="alternative splicing"/>
    <isoform>
        <id>Q13601-1</id>
        <name>1</name>
        <sequence type="displayed"/>
    </isoform>
    <isoform>
        <id>Q13601-2</id>
        <name>2</name>
        <sequence type="described" ref="VSP_042223"/>
    </isoform>
</comment>
<comment type="similarity">
    <text evidence="7">Belongs to the KRR1 family.</text>
</comment>
<comment type="sequence caution" evidence="7">
    <conflict type="frameshift">
        <sequence resource="EMBL-CDS" id="AAB00557"/>
    </conflict>
</comment>
<comment type="sequence caution" evidence="7">
    <conflict type="miscellaneous discrepancy">
        <sequence resource="EMBL-CDS" id="AAH05225"/>
    </conflict>
    <text>Contaminating sequence. Potential poly-A sequence.</text>
</comment>
<keyword id="KW-0002">3D-structure</keyword>
<keyword id="KW-0007">Acetylation</keyword>
<keyword id="KW-0025">Alternative splicing</keyword>
<keyword id="KW-0963">Cytoplasm</keyword>
<keyword id="KW-0903">Direct protein sequencing</keyword>
<keyword id="KW-1017">Isopeptide bond</keyword>
<keyword id="KW-0539">Nucleus</keyword>
<keyword id="KW-0597">Phosphoprotein</keyword>
<keyword id="KW-1267">Proteomics identification</keyword>
<keyword id="KW-1185">Reference proteome</keyword>
<keyword id="KW-0687">Ribonucleoprotein</keyword>
<keyword id="KW-0690">Ribosome biogenesis</keyword>
<keyword id="KW-0694">RNA-binding</keyword>
<keyword id="KW-0698">rRNA processing</keyword>
<keyword id="KW-0832">Ubl conjugation</keyword>
<sequence>MASPSLERPEKGAGKSEFRNQKPKPENQDESELLTVPDGWKEPAFSKEDNPRGLLEESSFATLFPKYREAYLKECWPLVQKALNEHHVNATLDLIEGSMTVCTTKKTFDPYIIIRARDLIKLLARSVSFEQAVRILQDDVACDIIKIGSLVRNKERFVKRRQRLIGPKGSTLKALELLTNCYIMVQGNTVSAIGPFSGLKEVRKVVLDTMKNIHPIYNIKSLMIKRELAKDSELRSQSWERFLPQFKHKNVNKRKEPKKKTVKKEYTPFPPPQPESQIDKELASGEYFLKANQKKRQKMEAIKAKQAEAISKRQEERNKAFIPPKEKPIVKPKEASTETKIDVASIKEKVKKAKNKKLGALTAEEIALKMEADEKKKKKKK</sequence>
<proteinExistence type="evidence at protein level"/>
<accession>Q13601</accession>
<accession>A0FIK6</accession>
<accession>A0JLP0</accession>
<accession>B2R989</accession>
<accession>E7EUQ0</accession>
<accession>Q8NEA8</accession>
<accession>Q8TC37</accession>
<accession>Q96AT5</accession>
<organism>
    <name type="scientific">Homo sapiens</name>
    <name type="common">Human</name>
    <dbReference type="NCBI Taxonomy" id="9606"/>
    <lineage>
        <taxon>Eukaryota</taxon>
        <taxon>Metazoa</taxon>
        <taxon>Chordata</taxon>
        <taxon>Craniata</taxon>
        <taxon>Vertebrata</taxon>
        <taxon>Euteleostomi</taxon>
        <taxon>Mammalia</taxon>
        <taxon>Eutheria</taxon>
        <taxon>Euarchontoglires</taxon>
        <taxon>Primates</taxon>
        <taxon>Haplorrhini</taxon>
        <taxon>Catarrhini</taxon>
        <taxon>Hominidae</taxon>
        <taxon>Homo</taxon>
    </lineage>
</organism>
<feature type="initiator methionine" description="Removed" evidence="5 11 12 13">
    <location>
        <position position="1"/>
    </location>
</feature>
<feature type="chain" id="PRO_0000050114" description="KRR1 small subunit processome component homolog">
    <location>
        <begin position="2"/>
        <end position="381"/>
    </location>
</feature>
<feature type="domain" description="KH">
    <location>
        <begin position="154"/>
        <end position="206"/>
    </location>
</feature>
<feature type="region of interest" description="Disordered" evidence="1">
    <location>
        <begin position="1"/>
        <end position="51"/>
    </location>
</feature>
<feature type="region of interest" description="Disordered" evidence="1">
    <location>
        <begin position="250"/>
        <end position="278"/>
    </location>
</feature>
<feature type="region of interest" description="Disordered" evidence="1">
    <location>
        <begin position="309"/>
        <end position="338"/>
    </location>
</feature>
<feature type="compositionally biased region" description="Basic and acidic residues" evidence="1">
    <location>
        <begin position="7"/>
        <end position="27"/>
    </location>
</feature>
<feature type="compositionally biased region" description="Basic and acidic residues" evidence="1">
    <location>
        <begin position="39"/>
        <end position="51"/>
    </location>
</feature>
<feature type="compositionally biased region" description="Basic residues" evidence="1">
    <location>
        <begin position="250"/>
        <end position="262"/>
    </location>
</feature>
<feature type="modified residue" description="N-acetylalanine" evidence="5 11 12 13">
    <location>
        <position position="2"/>
    </location>
</feature>
<feature type="modified residue" description="Phosphoserine" evidence="12 13 14">
    <location>
        <position position="3"/>
    </location>
</feature>
<feature type="modified residue" description="Phosphoserine" evidence="14">
    <location>
        <position position="5"/>
    </location>
</feature>
<feature type="cross-link" description="Glycyl lysine isopeptide (Lys-Gly) (interchain with G-Cter in SUMO2)" evidence="15">
    <location>
        <position position="24"/>
    </location>
</feature>
<feature type="cross-link" description="Glycyl lysine isopeptide (Lys-Gly) (interchain with G-Cter in SUMO2)" evidence="15">
    <location>
        <position position="340"/>
    </location>
</feature>
<feature type="cross-link" description="Glycyl lysine isopeptide (Lys-Gly) (interchain with G-Cter in SUMO2)" evidence="15">
    <location>
        <position position="369"/>
    </location>
</feature>
<feature type="splice variant" id="VSP_042223" description="In isoform 2." evidence="6">
    <location>
        <begin position="221"/>
        <end position="277"/>
    </location>
</feature>
<feature type="sequence variant" id="VAR_049680" description="In dbSNP:rs11540407.">
    <original>R</original>
    <variation>Q</variation>
    <location>
        <position position="134"/>
    </location>
</feature>
<feature type="sequence conflict" description="In Ref. 1; ABJ97679." evidence="7" ref="1">
    <original>A</original>
    <variation>V</variation>
    <location>
        <position position="13"/>
    </location>
</feature>
<feature type="sequence conflict" description="In Ref. 2; BAG36436." evidence="7" ref="2">
    <original>E</original>
    <variation>K</variation>
    <location>
        <position position="57"/>
    </location>
</feature>
<feature type="sequence conflict" description="In Ref. 4; AAH16778." evidence="7" ref="4">
    <original>E</original>
    <variation>G</variation>
    <location>
        <position position="69"/>
    </location>
</feature>
<feature type="sequence conflict" description="In Ref. 1; ABJ97679." evidence="7" ref="1">
    <original>R</original>
    <variation>G</variation>
    <location>
        <position position="161"/>
    </location>
</feature>
<feature type="sequence conflict" description="In Ref. 1; ABJ97679." evidence="7" ref="1">
    <original>I</original>
    <variation>V</variation>
    <location>
        <position position="165"/>
    </location>
</feature>
<feature type="sequence conflict" description="In Ref. 4; AAH26107." evidence="7" ref="4">
    <original>V</original>
    <variation>A</variation>
    <location>
        <position position="206"/>
    </location>
</feature>
<feature type="sequence conflict" description="In Ref. 4; AAH33887." evidence="7" ref="4">
    <original>E</original>
    <variation>G</variation>
    <location>
        <position position="275"/>
    </location>
</feature>
<feature type="sequence conflict" description="In Ref. 1; ABJ97679 and 4; AAH33887." evidence="7" ref="1 4">
    <original>T</original>
    <variation>A</variation>
    <location>
        <position position="339"/>
    </location>
</feature>
<feature type="sequence conflict" description="In Ref. 4; AAH05225." evidence="7" ref="4">
    <original>A</original>
    <variation>G</variation>
    <location>
        <position position="353"/>
    </location>
</feature>
<gene>
    <name evidence="8" type="primary">KRR1</name>
    <name type="synonym">HRB2</name>
</gene>
<reference key="1">
    <citation type="submission" date="2006-09" db="EMBL/GenBank/DDBJ databases">
        <title>A novel splicing of the HRB2 gene.</title>
        <authorList>
            <person name="Ma Z.F."/>
            <person name="Chen J."/>
            <person name="Li J.M."/>
        </authorList>
    </citation>
    <scope>NUCLEOTIDE SEQUENCE [MRNA] (ISOFORM 2)</scope>
    <source>
        <tissue>Testis</tissue>
    </source>
</reference>
<reference key="2">
    <citation type="journal article" date="2004" name="Nat. Genet.">
        <title>Complete sequencing and characterization of 21,243 full-length human cDNAs.</title>
        <authorList>
            <person name="Ota T."/>
            <person name="Suzuki Y."/>
            <person name="Nishikawa T."/>
            <person name="Otsuki T."/>
            <person name="Sugiyama T."/>
            <person name="Irie R."/>
            <person name="Wakamatsu A."/>
            <person name="Hayashi K."/>
            <person name="Sato H."/>
            <person name="Nagai K."/>
            <person name="Kimura K."/>
            <person name="Makita H."/>
            <person name="Sekine M."/>
            <person name="Obayashi M."/>
            <person name="Nishi T."/>
            <person name="Shibahara T."/>
            <person name="Tanaka T."/>
            <person name="Ishii S."/>
            <person name="Yamamoto J."/>
            <person name="Saito K."/>
            <person name="Kawai Y."/>
            <person name="Isono Y."/>
            <person name="Nakamura Y."/>
            <person name="Nagahari K."/>
            <person name="Murakami K."/>
            <person name="Yasuda T."/>
            <person name="Iwayanagi T."/>
            <person name="Wagatsuma M."/>
            <person name="Shiratori A."/>
            <person name="Sudo H."/>
            <person name="Hosoiri T."/>
            <person name="Kaku Y."/>
            <person name="Kodaira H."/>
            <person name="Kondo H."/>
            <person name="Sugawara M."/>
            <person name="Takahashi M."/>
            <person name="Kanda K."/>
            <person name="Yokoi T."/>
            <person name="Furuya T."/>
            <person name="Kikkawa E."/>
            <person name="Omura Y."/>
            <person name="Abe K."/>
            <person name="Kamihara K."/>
            <person name="Katsuta N."/>
            <person name="Sato K."/>
            <person name="Tanikawa M."/>
            <person name="Yamazaki M."/>
            <person name="Ninomiya K."/>
            <person name="Ishibashi T."/>
            <person name="Yamashita H."/>
            <person name="Murakawa K."/>
            <person name="Fujimori K."/>
            <person name="Tanai H."/>
            <person name="Kimata M."/>
            <person name="Watanabe M."/>
            <person name="Hiraoka S."/>
            <person name="Chiba Y."/>
            <person name="Ishida S."/>
            <person name="Ono Y."/>
            <person name="Takiguchi S."/>
            <person name="Watanabe S."/>
            <person name="Yosida M."/>
            <person name="Hotuta T."/>
            <person name="Kusano J."/>
            <person name="Kanehori K."/>
            <person name="Takahashi-Fujii A."/>
            <person name="Hara H."/>
            <person name="Tanase T.-O."/>
            <person name="Nomura Y."/>
            <person name="Togiya S."/>
            <person name="Komai F."/>
            <person name="Hara R."/>
            <person name="Takeuchi K."/>
            <person name="Arita M."/>
            <person name="Imose N."/>
            <person name="Musashino K."/>
            <person name="Yuuki H."/>
            <person name="Oshima A."/>
            <person name="Sasaki N."/>
            <person name="Aotsuka S."/>
            <person name="Yoshikawa Y."/>
            <person name="Matsunawa H."/>
            <person name="Ichihara T."/>
            <person name="Shiohata N."/>
            <person name="Sano S."/>
            <person name="Moriya S."/>
            <person name="Momiyama H."/>
            <person name="Satoh N."/>
            <person name="Takami S."/>
            <person name="Terashima Y."/>
            <person name="Suzuki O."/>
            <person name="Nakagawa S."/>
            <person name="Senoh A."/>
            <person name="Mizoguchi H."/>
            <person name="Goto Y."/>
            <person name="Shimizu F."/>
            <person name="Wakebe H."/>
            <person name="Hishigaki H."/>
            <person name="Watanabe T."/>
            <person name="Sugiyama A."/>
            <person name="Takemoto M."/>
            <person name="Kawakami B."/>
            <person name="Yamazaki M."/>
            <person name="Watanabe K."/>
            <person name="Kumagai A."/>
            <person name="Itakura S."/>
            <person name="Fukuzumi Y."/>
            <person name="Fujimori Y."/>
            <person name="Komiyama M."/>
            <person name="Tashiro H."/>
            <person name="Tanigami A."/>
            <person name="Fujiwara T."/>
            <person name="Ono T."/>
            <person name="Yamada K."/>
            <person name="Fujii Y."/>
            <person name="Ozaki K."/>
            <person name="Hirao M."/>
            <person name="Ohmori Y."/>
            <person name="Kawabata A."/>
            <person name="Hikiji T."/>
            <person name="Kobatake N."/>
            <person name="Inagaki H."/>
            <person name="Ikema Y."/>
            <person name="Okamoto S."/>
            <person name="Okitani R."/>
            <person name="Kawakami T."/>
            <person name="Noguchi S."/>
            <person name="Itoh T."/>
            <person name="Shigeta K."/>
            <person name="Senba T."/>
            <person name="Matsumura K."/>
            <person name="Nakajima Y."/>
            <person name="Mizuno T."/>
            <person name="Morinaga M."/>
            <person name="Sasaki M."/>
            <person name="Togashi T."/>
            <person name="Oyama M."/>
            <person name="Hata H."/>
            <person name="Watanabe M."/>
            <person name="Komatsu T."/>
            <person name="Mizushima-Sugano J."/>
            <person name="Satoh T."/>
            <person name="Shirai Y."/>
            <person name="Takahashi Y."/>
            <person name="Nakagawa K."/>
            <person name="Okumura K."/>
            <person name="Nagase T."/>
            <person name="Nomura N."/>
            <person name="Kikuchi H."/>
            <person name="Masuho Y."/>
            <person name="Yamashita R."/>
            <person name="Nakai K."/>
            <person name="Yada T."/>
            <person name="Nakamura Y."/>
            <person name="Ohara O."/>
            <person name="Isogai T."/>
            <person name="Sugano S."/>
        </authorList>
    </citation>
    <scope>NUCLEOTIDE SEQUENCE [LARGE SCALE MRNA] (ISOFORM 1)</scope>
    <source>
        <tissue>Fibroblast</tissue>
    </source>
</reference>
<reference key="3">
    <citation type="journal article" date="2006" name="Nature">
        <title>The finished DNA sequence of human chromosome 12.</title>
        <authorList>
            <person name="Scherer S.E."/>
            <person name="Muzny D.M."/>
            <person name="Buhay C.J."/>
            <person name="Chen R."/>
            <person name="Cree A."/>
            <person name="Ding Y."/>
            <person name="Dugan-Rocha S."/>
            <person name="Gill R."/>
            <person name="Gunaratne P."/>
            <person name="Harris R.A."/>
            <person name="Hawes A.C."/>
            <person name="Hernandez J."/>
            <person name="Hodgson A.V."/>
            <person name="Hume J."/>
            <person name="Jackson A."/>
            <person name="Khan Z.M."/>
            <person name="Kovar-Smith C."/>
            <person name="Lewis L.R."/>
            <person name="Lozado R.J."/>
            <person name="Metzker M.L."/>
            <person name="Milosavljevic A."/>
            <person name="Miner G.R."/>
            <person name="Montgomery K.T."/>
            <person name="Morgan M.B."/>
            <person name="Nazareth L.V."/>
            <person name="Scott G."/>
            <person name="Sodergren E."/>
            <person name="Song X.-Z."/>
            <person name="Steffen D."/>
            <person name="Lovering R.C."/>
            <person name="Wheeler D.A."/>
            <person name="Worley K.C."/>
            <person name="Yuan Y."/>
            <person name="Zhang Z."/>
            <person name="Adams C.Q."/>
            <person name="Ansari-Lari M.A."/>
            <person name="Ayele M."/>
            <person name="Brown M.J."/>
            <person name="Chen G."/>
            <person name="Chen Z."/>
            <person name="Clerc-Blankenburg K.P."/>
            <person name="Davis C."/>
            <person name="Delgado O."/>
            <person name="Dinh H.H."/>
            <person name="Draper H."/>
            <person name="Gonzalez-Garay M.L."/>
            <person name="Havlak P."/>
            <person name="Jackson L.R."/>
            <person name="Jacob L.S."/>
            <person name="Kelly S.H."/>
            <person name="Li L."/>
            <person name="Li Z."/>
            <person name="Liu J."/>
            <person name="Liu W."/>
            <person name="Lu J."/>
            <person name="Maheshwari M."/>
            <person name="Nguyen B.-V."/>
            <person name="Okwuonu G.O."/>
            <person name="Pasternak S."/>
            <person name="Perez L.M."/>
            <person name="Plopper F.J.H."/>
            <person name="Santibanez J."/>
            <person name="Shen H."/>
            <person name="Tabor P.E."/>
            <person name="Verduzco D."/>
            <person name="Waldron L."/>
            <person name="Wang Q."/>
            <person name="Williams G.A."/>
            <person name="Zhang J."/>
            <person name="Zhou J."/>
            <person name="Allen C.C."/>
            <person name="Amin A.G."/>
            <person name="Anyalebechi V."/>
            <person name="Bailey M."/>
            <person name="Barbaria J.A."/>
            <person name="Bimage K.E."/>
            <person name="Bryant N.P."/>
            <person name="Burch P.E."/>
            <person name="Burkett C.E."/>
            <person name="Burrell K.L."/>
            <person name="Calderon E."/>
            <person name="Cardenas V."/>
            <person name="Carter K."/>
            <person name="Casias K."/>
            <person name="Cavazos I."/>
            <person name="Cavazos S.R."/>
            <person name="Ceasar H."/>
            <person name="Chacko J."/>
            <person name="Chan S.N."/>
            <person name="Chavez D."/>
            <person name="Christopoulos C."/>
            <person name="Chu J."/>
            <person name="Cockrell R."/>
            <person name="Cox C.D."/>
            <person name="Dang M."/>
            <person name="Dathorne S.R."/>
            <person name="David R."/>
            <person name="Davis C.M."/>
            <person name="Davy-Carroll L."/>
            <person name="Deshazo D.R."/>
            <person name="Donlin J.E."/>
            <person name="D'Souza L."/>
            <person name="Eaves K.A."/>
            <person name="Egan A."/>
            <person name="Emery-Cohen A.J."/>
            <person name="Escotto M."/>
            <person name="Flagg N."/>
            <person name="Forbes L.D."/>
            <person name="Gabisi A.M."/>
            <person name="Garza M."/>
            <person name="Hamilton C."/>
            <person name="Henderson N."/>
            <person name="Hernandez O."/>
            <person name="Hines S."/>
            <person name="Hogues M.E."/>
            <person name="Huang M."/>
            <person name="Idlebird D.G."/>
            <person name="Johnson R."/>
            <person name="Jolivet A."/>
            <person name="Jones S."/>
            <person name="Kagan R."/>
            <person name="King L.M."/>
            <person name="Leal B."/>
            <person name="Lebow H."/>
            <person name="Lee S."/>
            <person name="LeVan J.M."/>
            <person name="Lewis L.C."/>
            <person name="London P."/>
            <person name="Lorensuhewa L.M."/>
            <person name="Loulseged H."/>
            <person name="Lovett D.A."/>
            <person name="Lucier A."/>
            <person name="Lucier R.L."/>
            <person name="Ma J."/>
            <person name="Madu R.C."/>
            <person name="Mapua P."/>
            <person name="Martindale A.D."/>
            <person name="Martinez E."/>
            <person name="Massey E."/>
            <person name="Mawhiney S."/>
            <person name="Meador M.G."/>
            <person name="Mendez S."/>
            <person name="Mercado C."/>
            <person name="Mercado I.C."/>
            <person name="Merritt C.E."/>
            <person name="Miner Z.L."/>
            <person name="Minja E."/>
            <person name="Mitchell T."/>
            <person name="Mohabbat F."/>
            <person name="Mohabbat K."/>
            <person name="Montgomery B."/>
            <person name="Moore N."/>
            <person name="Morris S."/>
            <person name="Munidasa M."/>
            <person name="Ngo R.N."/>
            <person name="Nguyen N.B."/>
            <person name="Nickerson E."/>
            <person name="Nwaokelemeh O.O."/>
            <person name="Nwokenkwo S."/>
            <person name="Obregon M."/>
            <person name="Oguh M."/>
            <person name="Oragunye N."/>
            <person name="Oviedo R.J."/>
            <person name="Parish B.J."/>
            <person name="Parker D.N."/>
            <person name="Parrish J."/>
            <person name="Parks K.L."/>
            <person name="Paul H.A."/>
            <person name="Payton B.A."/>
            <person name="Perez A."/>
            <person name="Perrin W."/>
            <person name="Pickens A."/>
            <person name="Primus E.L."/>
            <person name="Pu L.-L."/>
            <person name="Puazo M."/>
            <person name="Quiles M.M."/>
            <person name="Quiroz J.B."/>
            <person name="Rabata D."/>
            <person name="Reeves K."/>
            <person name="Ruiz S.J."/>
            <person name="Shao H."/>
            <person name="Sisson I."/>
            <person name="Sonaike T."/>
            <person name="Sorelle R.P."/>
            <person name="Sutton A.E."/>
            <person name="Svatek A.F."/>
            <person name="Svetz L.A."/>
            <person name="Tamerisa K.S."/>
            <person name="Taylor T.R."/>
            <person name="Teague B."/>
            <person name="Thomas N."/>
            <person name="Thorn R.D."/>
            <person name="Trejos Z.Y."/>
            <person name="Trevino B.K."/>
            <person name="Ukegbu O.N."/>
            <person name="Urban J.B."/>
            <person name="Vasquez L.I."/>
            <person name="Vera V.A."/>
            <person name="Villasana D.M."/>
            <person name="Wang L."/>
            <person name="Ward-Moore S."/>
            <person name="Warren J.T."/>
            <person name="Wei X."/>
            <person name="White F."/>
            <person name="Williamson A.L."/>
            <person name="Wleczyk R."/>
            <person name="Wooden H.S."/>
            <person name="Wooden S.H."/>
            <person name="Yen J."/>
            <person name="Yoon L."/>
            <person name="Yoon V."/>
            <person name="Zorrilla S.E."/>
            <person name="Nelson D."/>
            <person name="Kucherlapati R."/>
            <person name="Weinstock G."/>
            <person name="Gibbs R.A."/>
        </authorList>
    </citation>
    <scope>NUCLEOTIDE SEQUENCE [LARGE SCALE GENOMIC DNA]</scope>
</reference>
<reference key="4">
    <citation type="journal article" date="2004" name="Genome Res.">
        <title>The status, quality, and expansion of the NIH full-length cDNA project: the Mammalian Gene Collection (MGC).</title>
        <authorList>
            <consortium name="The MGC Project Team"/>
        </authorList>
    </citation>
    <scope>NUCLEOTIDE SEQUENCE [LARGE SCALE MRNA] (ISOFORM 1)</scope>
    <source>
        <tissue>Bone marrow</tissue>
        <tissue>Testis</tissue>
        <tissue>Urinary bladder</tissue>
    </source>
</reference>
<reference key="5">
    <citation type="submission" date="1996-04" db="EMBL/GenBank/DDBJ databases">
        <title>HIV Rev interacting protein-1.</title>
        <authorList>
            <person name="D'Sa-Eipper C."/>
            <person name="Venkatesh L.K."/>
            <person name="Chinnadurai G."/>
        </authorList>
    </citation>
    <scope>NUCLEOTIDE SEQUENCE [MRNA] OF 1-377 (ISOFORM 1)</scope>
</reference>
<reference key="6">
    <citation type="submission" date="2005-08" db="UniProtKB">
        <authorList>
            <person name="Bienvenut W.V."/>
        </authorList>
    </citation>
    <scope>PROTEIN SEQUENCE OF 2-11; 53-66; 107-115 AND 358-369</scope>
    <scope>CLEAVAGE OF INITIATOR METHIONINE</scope>
    <scope>ACETYLATION AT ALA-2</scope>
    <scope>IDENTIFICATION BY MASS SPECTROMETRY</scope>
    <source>
        <tissue>Cervix carcinoma</tissue>
    </source>
</reference>
<reference key="7">
    <citation type="journal article" date="1995" name="Proc. Natl. Acad. Sci. U.S.A.">
        <title>The glucocorticoid receptor type II complex is a target of the HIV-1 vpr gene product.</title>
        <authorList>
            <person name="Refaeli Y."/>
            <person name="Levy D.N."/>
            <person name="Weiner D.B."/>
        </authorList>
    </citation>
    <scope>INTERACTION WITH HIV-1 VPR</scope>
    <scope>SUBUNIT</scope>
    <scope>SUBCELLULAR LOCATION</scope>
</reference>
<reference key="8">
    <citation type="journal article" date="2002" name="Mol. Biol. Cell">
        <title>Functional proteomic analysis of human nucleolus.</title>
        <authorList>
            <person name="Scherl A."/>
            <person name="Coute Y."/>
            <person name="Deon C."/>
            <person name="Calle A."/>
            <person name="Kindbeiter K."/>
            <person name="Sanchez J.-C."/>
            <person name="Greco A."/>
            <person name="Hochstrasser D.F."/>
            <person name="Diaz J.-J."/>
        </authorList>
    </citation>
    <scope>SUBCELLULAR LOCATION [LARGE SCALE ANALYSIS]</scope>
    <source>
        <tissue>Cervix carcinoma</tissue>
    </source>
</reference>
<reference key="9">
    <citation type="journal article" date="2006" name="Cell">
        <title>Global, in vivo, and site-specific phosphorylation dynamics in signaling networks.</title>
        <authorList>
            <person name="Olsen J.V."/>
            <person name="Blagoev B."/>
            <person name="Gnad F."/>
            <person name="Macek B."/>
            <person name="Kumar C."/>
            <person name="Mortensen P."/>
            <person name="Mann M."/>
        </authorList>
    </citation>
    <scope>IDENTIFICATION BY MASS SPECTROMETRY [LARGE SCALE ANALYSIS]</scope>
    <source>
        <tissue>Cervix carcinoma</tissue>
    </source>
</reference>
<reference key="10">
    <citation type="journal article" date="2009" name="Anal. Chem.">
        <title>Lys-N and trypsin cover complementary parts of the phosphoproteome in a refined SCX-based approach.</title>
        <authorList>
            <person name="Gauci S."/>
            <person name="Helbig A.O."/>
            <person name="Slijper M."/>
            <person name="Krijgsveld J."/>
            <person name="Heck A.J."/>
            <person name="Mohammed S."/>
        </authorList>
    </citation>
    <scope>ACETYLATION [LARGE SCALE ANALYSIS] AT ALA-2</scope>
    <scope>CLEAVAGE OF INITIATOR METHIONINE [LARGE SCALE ANALYSIS]</scope>
    <scope>IDENTIFICATION BY MASS SPECTROMETRY [LARGE SCALE ANALYSIS]</scope>
</reference>
<reference key="11">
    <citation type="journal article" date="2010" name="Sci. Signal.">
        <title>Quantitative phosphoproteomics reveals widespread full phosphorylation site occupancy during mitosis.</title>
        <authorList>
            <person name="Olsen J.V."/>
            <person name="Vermeulen M."/>
            <person name="Santamaria A."/>
            <person name="Kumar C."/>
            <person name="Miller M.L."/>
            <person name="Jensen L.J."/>
            <person name="Gnad F."/>
            <person name="Cox J."/>
            <person name="Jensen T.S."/>
            <person name="Nigg E.A."/>
            <person name="Brunak S."/>
            <person name="Mann M."/>
        </authorList>
    </citation>
    <scope>ACETYLATION [LARGE SCALE ANALYSIS] AT ALA-2</scope>
    <scope>PHOSPHORYLATION [LARGE SCALE ANALYSIS] AT SER-3</scope>
    <scope>CLEAVAGE OF INITIATOR METHIONINE [LARGE SCALE ANALYSIS]</scope>
    <scope>IDENTIFICATION BY MASS SPECTROMETRY [LARGE SCALE ANALYSIS]</scope>
    <source>
        <tissue>Cervix carcinoma</tissue>
    </source>
</reference>
<reference key="12">
    <citation type="journal article" date="2011" name="BMC Syst. Biol.">
        <title>Initial characterization of the human central proteome.</title>
        <authorList>
            <person name="Burkard T.R."/>
            <person name="Planyavsky M."/>
            <person name="Kaupe I."/>
            <person name="Breitwieser F.P."/>
            <person name="Buerckstuemmer T."/>
            <person name="Bennett K.L."/>
            <person name="Superti-Furga G."/>
            <person name="Colinge J."/>
        </authorList>
    </citation>
    <scope>IDENTIFICATION BY MASS SPECTROMETRY [LARGE SCALE ANALYSIS]</scope>
</reference>
<reference key="13">
    <citation type="journal article" date="2011" name="Sci. Signal.">
        <title>System-wide temporal characterization of the proteome and phosphoproteome of human embryonic stem cell differentiation.</title>
        <authorList>
            <person name="Rigbolt K.T."/>
            <person name="Prokhorova T.A."/>
            <person name="Akimov V."/>
            <person name="Henningsen J."/>
            <person name="Johansen P.T."/>
            <person name="Kratchmarova I."/>
            <person name="Kassem M."/>
            <person name="Mann M."/>
            <person name="Olsen J.V."/>
            <person name="Blagoev B."/>
        </authorList>
    </citation>
    <scope>ACETYLATION [LARGE SCALE ANALYSIS] AT ALA-2</scope>
    <scope>PHOSPHORYLATION [LARGE SCALE ANALYSIS] AT SER-3</scope>
    <scope>CLEAVAGE OF INITIATOR METHIONINE [LARGE SCALE ANALYSIS]</scope>
    <scope>IDENTIFICATION BY MASS SPECTROMETRY [LARGE SCALE ANALYSIS]</scope>
</reference>
<reference key="14">
    <citation type="journal article" date="2013" name="J. Proteome Res.">
        <title>Toward a comprehensive characterization of a human cancer cell phosphoproteome.</title>
        <authorList>
            <person name="Zhou H."/>
            <person name="Di Palma S."/>
            <person name="Preisinger C."/>
            <person name="Peng M."/>
            <person name="Polat A.N."/>
            <person name="Heck A.J."/>
            <person name="Mohammed S."/>
        </authorList>
    </citation>
    <scope>PHOSPHORYLATION [LARGE SCALE ANALYSIS] AT SER-3 AND SER-5</scope>
    <scope>IDENTIFICATION BY MASS SPECTROMETRY [LARGE SCALE ANALYSIS]</scope>
    <source>
        <tissue>Cervix carcinoma</tissue>
        <tissue>Erythroleukemia</tissue>
    </source>
</reference>
<reference key="15">
    <citation type="journal article" date="2017" name="Nat. Struct. Mol. Biol.">
        <title>Site-specific mapping of the human SUMO proteome reveals co-modification with phosphorylation.</title>
        <authorList>
            <person name="Hendriks I.A."/>
            <person name="Lyon D."/>
            <person name="Young C."/>
            <person name="Jensen L.J."/>
            <person name="Vertegaal A.C."/>
            <person name="Nielsen M.L."/>
        </authorList>
    </citation>
    <scope>SUMOYLATION [LARGE SCALE ANALYSIS] AT LYS-24; LYS-340 AND LYS-369</scope>
    <scope>IDENTIFICATION BY MASS SPECTROMETRY [LARGE SCALE ANALYSIS]</scope>
</reference>
<reference evidence="9 10" key="16">
    <citation type="journal article" date="2021" name="Science">
        <title>Nucleolar maturation of the human small subunit processome.</title>
        <authorList>
            <person name="Singh S."/>
            <person name="Vanden Broeck A."/>
            <person name="Miller L."/>
            <person name="Chaker-Margot M."/>
            <person name="Klinge S."/>
        </authorList>
    </citation>
    <scope>STRUCTURE BY ELECTRON MICROSCOPY (3.60 ANGSTROMS)</scope>
    <scope>FUNCTION</scope>
    <scope>SUBUNIT</scope>
    <scope>SUBCELLULAR LOCATION</scope>
</reference>
<protein>
    <recommendedName>
        <fullName>KRR1 small subunit processome component homolog</fullName>
    </recommendedName>
    <alternativeName>
        <fullName>HIV-1 Rev-binding protein 2</fullName>
    </alternativeName>
    <alternativeName>
        <fullName>KRR-R motif-containing protein 1</fullName>
    </alternativeName>
    <alternativeName>
        <fullName>Rev-interacting protein 1</fullName>
        <shortName>Rip-1</shortName>
    </alternativeName>
</protein>
<dbReference type="EMBL" id="EF010919">
    <property type="protein sequence ID" value="ABJ97679.1"/>
    <property type="molecule type" value="mRNA"/>
</dbReference>
<dbReference type="EMBL" id="AK313687">
    <property type="protein sequence ID" value="BAG36436.1"/>
    <property type="molecule type" value="mRNA"/>
</dbReference>
<dbReference type="EMBL" id="AC022507">
    <property type="status" value="NOT_ANNOTATED_CDS"/>
    <property type="molecule type" value="Genomic_DNA"/>
</dbReference>
<dbReference type="EMBL" id="AC121761">
    <property type="status" value="NOT_ANNOTATED_CDS"/>
    <property type="molecule type" value="Genomic_DNA"/>
</dbReference>
<dbReference type="EMBL" id="BC005225">
    <property type="protein sequence ID" value="AAH05225.1"/>
    <property type="status" value="ALT_SEQ"/>
    <property type="molecule type" value="mRNA"/>
</dbReference>
<dbReference type="EMBL" id="BC016778">
    <property type="protein sequence ID" value="AAH16778.1"/>
    <property type="molecule type" value="mRNA"/>
</dbReference>
<dbReference type="EMBL" id="BC026107">
    <property type="protein sequence ID" value="AAH26107.1"/>
    <property type="molecule type" value="mRNA"/>
</dbReference>
<dbReference type="EMBL" id="BC033887">
    <property type="protein sequence ID" value="AAH33887.1"/>
    <property type="molecule type" value="mRNA"/>
</dbReference>
<dbReference type="EMBL" id="U55766">
    <property type="protein sequence ID" value="AAB00557.1"/>
    <property type="status" value="ALT_FRAME"/>
    <property type="molecule type" value="mRNA"/>
</dbReference>
<dbReference type="CCDS" id="CCDS9012.1">
    <molecule id="Q13601-1"/>
</dbReference>
<dbReference type="PIR" id="G02629">
    <property type="entry name" value="G02629"/>
</dbReference>
<dbReference type="RefSeq" id="NP_008974.5">
    <molecule id="Q13601-1"/>
    <property type="nucleotide sequence ID" value="NM_007043.6"/>
</dbReference>
<dbReference type="PDB" id="7MQ8">
    <property type="method" value="EM"/>
    <property type="resolution" value="3.60 A"/>
    <property type="chains" value="NY=1-381"/>
</dbReference>
<dbReference type="PDB" id="7MQ9">
    <property type="method" value="EM"/>
    <property type="resolution" value="3.87 A"/>
    <property type="chains" value="NY=1-381"/>
</dbReference>
<dbReference type="PDBsum" id="7MQ8"/>
<dbReference type="PDBsum" id="7MQ9"/>
<dbReference type="EMDB" id="EMD-23936"/>
<dbReference type="EMDB" id="EMD-23937"/>
<dbReference type="SMR" id="Q13601"/>
<dbReference type="BioGRID" id="116284">
    <property type="interactions" value="392"/>
</dbReference>
<dbReference type="ComplexPortal" id="CPX-2511">
    <property type="entry name" value="Small ribosomal subunit processome"/>
</dbReference>
<dbReference type="FunCoup" id="Q13601">
    <property type="interactions" value="3167"/>
</dbReference>
<dbReference type="IntAct" id="Q13601">
    <property type="interactions" value="277"/>
</dbReference>
<dbReference type="MINT" id="Q13601"/>
<dbReference type="STRING" id="9606.ENSP00000229214"/>
<dbReference type="iPTMnet" id="Q13601"/>
<dbReference type="PhosphoSitePlus" id="Q13601"/>
<dbReference type="SwissPalm" id="Q13601"/>
<dbReference type="BioMuta" id="KRR1"/>
<dbReference type="DMDM" id="50400303"/>
<dbReference type="jPOST" id="Q13601"/>
<dbReference type="MassIVE" id="Q13601"/>
<dbReference type="PaxDb" id="9606-ENSP00000229214"/>
<dbReference type="PeptideAtlas" id="Q13601"/>
<dbReference type="ProteomicsDB" id="59591">
    <molecule id="Q13601-1"/>
</dbReference>
<dbReference type="ProteomicsDB" id="59592">
    <molecule id="Q13601-2"/>
</dbReference>
<dbReference type="Pumba" id="Q13601"/>
<dbReference type="Antibodypedia" id="29617">
    <property type="antibodies" value="177 antibodies from 28 providers"/>
</dbReference>
<dbReference type="DNASU" id="11103"/>
<dbReference type="Ensembl" id="ENST00000229214.9">
    <molecule id="Q13601-1"/>
    <property type="protein sequence ID" value="ENSP00000229214.4"/>
    <property type="gene ID" value="ENSG00000111615.14"/>
</dbReference>
<dbReference type="Ensembl" id="ENST00000438169.6">
    <molecule id="Q13601-2"/>
    <property type="protein sequence ID" value="ENSP00000411740.2"/>
    <property type="gene ID" value="ENSG00000111615.14"/>
</dbReference>
<dbReference type="GeneID" id="11103"/>
<dbReference type="KEGG" id="hsa:11103"/>
<dbReference type="MANE-Select" id="ENST00000229214.9">
    <property type="protein sequence ID" value="ENSP00000229214.4"/>
    <property type="RefSeq nucleotide sequence ID" value="NM_007043.7"/>
    <property type="RefSeq protein sequence ID" value="NP_008974.5"/>
</dbReference>
<dbReference type="UCSC" id="uc001sxt.4">
    <molecule id="Q13601-1"/>
    <property type="organism name" value="human"/>
</dbReference>
<dbReference type="AGR" id="HGNC:5176"/>
<dbReference type="CTD" id="11103"/>
<dbReference type="DisGeNET" id="11103"/>
<dbReference type="GeneCards" id="KRR1"/>
<dbReference type="HGNC" id="HGNC:5176">
    <property type="gene designation" value="KRR1"/>
</dbReference>
<dbReference type="HPA" id="ENSG00000111615">
    <property type="expression patterns" value="Low tissue specificity"/>
</dbReference>
<dbReference type="MIM" id="612817">
    <property type="type" value="gene"/>
</dbReference>
<dbReference type="neXtProt" id="NX_Q13601"/>
<dbReference type="OpenTargets" id="ENSG00000111615"/>
<dbReference type="PharmGKB" id="PA29450"/>
<dbReference type="VEuPathDB" id="HostDB:ENSG00000111615"/>
<dbReference type="eggNOG" id="KOG2874">
    <property type="taxonomic scope" value="Eukaryota"/>
</dbReference>
<dbReference type="GeneTree" id="ENSGT00390000018775"/>
<dbReference type="HOGENOM" id="CLU_040185_0_0_1"/>
<dbReference type="InParanoid" id="Q13601"/>
<dbReference type="OMA" id="TPDIDKW"/>
<dbReference type="OrthoDB" id="441223at2759"/>
<dbReference type="PAN-GO" id="Q13601">
    <property type="GO annotations" value="2 GO annotations based on evolutionary models"/>
</dbReference>
<dbReference type="PhylomeDB" id="Q13601"/>
<dbReference type="TreeFam" id="TF105745"/>
<dbReference type="PathwayCommons" id="Q13601"/>
<dbReference type="Reactome" id="R-HSA-6790901">
    <property type="pathway name" value="rRNA modification in the nucleus and cytosol"/>
</dbReference>
<dbReference type="Reactome" id="R-HSA-6791226">
    <property type="pathway name" value="Major pathway of rRNA processing in the nucleolus and cytosol"/>
</dbReference>
<dbReference type="SignaLink" id="Q13601"/>
<dbReference type="BioGRID-ORCS" id="11103">
    <property type="hits" value="749 hits in 1162 CRISPR screens"/>
</dbReference>
<dbReference type="CD-CODE" id="232F8A39">
    <property type="entry name" value="P-body"/>
</dbReference>
<dbReference type="CD-CODE" id="91857CE7">
    <property type="entry name" value="Nucleolus"/>
</dbReference>
<dbReference type="ChiTaRS" id="KRR1">
    <property type="organism name" value="human"/>
</dbReference>
<dbReference type="GeneWiki" id="KRR1"/>
<dbReference type="GenomeRNAi" id="11103"/>
<dbReference type="Pharos" id="Q13601">
    <property type="development level" value="Tbio"/>
</dbReference>
<dbReference type="PRO" id="PR:Q13601"/>
<dbReference type="Proteomes" id="UP000005640">
    <property type="component" value="Chromosome 12"/>
</dbReference>
<dbReference type="RNAct" id="Q13601">
    <property type="molecule type" value="protein"/>
</dbReference>
<dbReference type="Bgee" id="ENSG00000111615">
    <property type="expression patterns" value="Expressed in calcaneal tendon and 202 other cell types or tissues"/>
</dbReference>
<dbReference type="GO" id="GO:0005694">
    <property type="term" value="C:chromosome"/>
    <property type="evidence" value="ECO:0000314"/>
    <property type="project" value="HPA"/>
</dbReference>
<dbReference type="GO" id="GO:0005737">
    <property type="term" value="C:cytoplasm"/>
    <property type="evidence" value="ECO:0007669"/>
    <property type="project" value="UniProtKB-SubCell"/>
</dbReference>
<dbReference type="GO" id="GO:0045171">
    <property type="term" value="C:intercellular bridge"/>
    <property type="evidence" value="ECO:0000314"/>
    <property type="project" value="HPA"/>
</dbReference>
<dbReference type="GO" id="GO:0016020">
    <property type="term" value="C:membrane"/>
    <property type="evidence" value="ECO:0007005"/>
    <property type="project" value="UniProtKB"/>
</dbReference>
<dbReference type="GO" id="GO:0005730">
    <property type="term" value="C:nucleolus"/>
    <property type="evidence" value="ECO:0000314"/>
    <property type="project" value="HPA"/>
</dbReference>
<dbReference type="GO" id="GO:0005654">
    <property type="term" value="C:nucleoplasm"/>
    <property type="evidence" value="ECO:0000314"/>
    <property type="project" value="HPA"/>
</dbReference>
<dbReference type="GO" id="GO:0032040">
    <property type="term" value="C:small-subunit processome"/>
    <property type="evidence" value="ECO:0000314"/>
    <property type="project" value="UniProtKB"/>
</dbReference>
<dbReference type="GO" id="GO:0003723">
    <property type="term" value="F:RNA binding"/>
    <property type="evidence" value="ECO:0007005"/>
    <property type="project" value="UniProtKB"/>
</dbReference>
<dbReference type="GO" id="GO:0042274">
    <property type="term" value="P:ribosomal small subunit biogenesis"/>
    <property type="evidence" value="ECO:0000314"/>
    <property type="project" value="UniProtKB"/>
</dbReference>
<dbReference type="GO" id="GO:0006364">
    <property type="term" value="P:rRNA processing"/>
    <property type="evidence" value="ECO:0007669"/>
    <property type="project" value="UniProtKB-KW"/>
</dbReference>
<dbReference type="CDD" id="cd22393">
    <property type="entry name" value="KH-I_KRR1_rpt1"/>
    <property type="match status" value="1"/>
</dbReference>
<dbReference type="CDD" id="cd22394">
    <property type="entry name" value="KH-I_KRR1_rpt2"/>
    <property type="match status" value="1"/>
</dbReference>
<dbReference type="FunFam" id="3.30.1370.10:FF:000011">
    <property type="entry name" value="KRR1 small subunit processome component"/>
    <property type="match status" value="1"/>
</dbReference>
<dbReference type="FunFam" id="3.30.1370.10:FF:000014">
    <property type="entry name" value="KRR1 small subunit processome component"/>
    <property type="match status" value="1"/>
</dbReference>
<dbReference type="Gene3D" id="3.30.1370.10">
    <property type="entry name" value="K Homology domain, type 1"/>
    <property type="match status" value="2"/>
</dbReference>
<dbReference type="InterPro" id="IPR004087">
    <property type="entry name" value="KH_dom"/>
</dbReference>
<dbReference type="InterPro" id="IPR036612">
    <property type="entry name" value="KH_dom_type_1_sf"/>
</dbReference>
<dbReference type="InterPro" id="IPR041174">
    <property type="entry name" value="KRR1-like_KH1"/>
</dbReference>
<dbReference type="InterPro" id="IPR048550">
    <property type="entry name" value="KRR1-like_KH1_euk"/>
</dbReference>
<dbReference type="InterPro" id="IPR048548">
    <property type="entry name" value="KRR1-like_KH2"/>
</dbReference>
<dbReference type="InterPro" id="IPR048549">
    <property type="entry name" value="KRR1-like_KH2_euk"/>
</dbReference>
<dbReference type="InterPro" id="IPR024166">
    <property type="entry name" value="rRNA_assembly_KRR1"/>
</dbReference>
<dbReference type="PANTHER" id="PTHR12581">
    <property type="entry name" value="HIV-1 REV BINDING PROTEIN 2, 3"/>
    <property type="match status" value="1"/>
</dbReference>
<dbReference type="PANTHER" id="PTHR12581:SF0">
    <property type="entry name" value="KRR1 SMALL SUBUNIT PROCESSOME COMPONENT HOMOLOG"/>
    <property type="match status" value="1"/>
</dbReference>
<dbReference type="Pfam" id="PF17903">
    <property type="entry name" value="KH_KRR1_1st"/>
    <property type="match status" value="1"/>
</dbReference>
<dbReference type="Pfam" id="PF21800">
    <property type="entry name" value="KH_KRR1_2nd"/>
    <property type="match status" value="1"/>
</dbReference>
<dbReference type="PIRSF" id="PIRSF006515">
    <property type="entry name" value="KRR1"/>
    <property type="match status" value="1"/>
</dbReference>
<dbReference type="SMART" id="SM00322">
    <property type="entry name" value="KH"/>
    <property type="match status" value="1"/>
</dbReference>
<dbReference type="SUPFAM" id="SSF54791">
    <property type="entry name" value="Eukaryotic type KH-domain (KH-domain type I)"/>
    <property type="match status" value="1"/>
</dbReference>